<gene>
    <name type="primary">TAS2R7</name>
</gene>
<accession>Q646F6</accession>
<proteinExistence type="inferred from homology"/>
<reference key="1">
    <citation type="journal article" date="2005" name="Mol. Biol. Evol.">
        <title>Evolution of bitter taste receptors in humans and apes.</title>
        <authorList>
            <person name="Fischer A."/>
            <person name="Gilad Y."/>
            <person name="Man O."/>
            <person name="Paeaebo S."/>
        </authorList>
    </citation>
    <scope>NUCLEOTIDE SEQUENCE [GENOMIC DNA]</scope>
</reference>
<feature type="chain" id="PRO_0000082224" description="Taste receptor type 2 member 7">
    <location>
        <begin position="1"/>
        <end position="317"/>
    </location>
</feature>
<feature type="topological domain" description="Extracellular" evidence="2">
    <location>
        <begin position="1"/>
        <end position="9"/>
    </location>
</feature>
<feature type="transmembrane region" description="Helical; Name=1" evidence="2">
    <location>
        <begin position="10"/>
        <end position="30"/>
    </location>
</feature>
<feature type="topological domain" description="Cytoplasmic" evidence="2">
    <location>
        <begin position="31"/>
        <end position="55"/>
    </location>
</feature>
<feature type="transmembrane region" description="Helical; Name=2" evidence="2">
    <location>
        <begin position="56"/>
        <end position="76"/>
    </location>
</feature>
<feature type="topological domain" description="Extracellular" evidence="2">
    <location>
        <begin position="77"/>
        <end position="94"/>
    </location>
</feature>
<feature type="transmembrane region" description="Helical; Name=3" evidence="2">
    <location>
        <begin position="95"/>
        <end position="115"/>
    </location>
</feature>
<feature type="topological domain" description="Cytoplasmic" evidence="2">
    <location>
        <begin position="116"/>
        <end position="128"/>
    </location>
</feature>
<feature type="transmembrane region" description="Helical; Name=4" evidence="2">
    <location>
        <begin position="129"/>
        <end position="149"/>
    </location>
</feature>
<feature type="topological domain" description="Extracellular" evidence="2">
    <location>
        <begin position="150"/>
        <end position="187"/>
    </location>
</feature>
<feature type="transmembrane region" description="Helical; Name=5" evidence="2">
    <location>
        <begin position="188"/>
        <end position="208"/>
    </location>
</feature>
<feature type="topological domain" description="Cytoplasmic" evidence="2">
    <location>
        <begin position="209"/>
        <end position="235"/>
    </location>
</feature>
<feature type="transmembrane region" description="Helical; Name=6" evidence="2">
    <location>
        <begin position="236"/>
        <end position="256"/>
    </location>
</feature>
<feature type="topological domain" description="Extracellular" evidence="2">
    <location>
        <begin position="257"/>
        <end position="266"/>
    </location>
</feature>
<feature type="transmembrane region" description="Helical; Name=7" evidence="2">
    <location>
        <begin position="267"/>
        <end position="287"/>
    </location>
</feature>
<feature type="topological domain" description="Cytoplasmic" evidence="2">
    <location>
        <begin position="288"/>
        <end position="317"/>
    </location>
</feature>
<feature type="glycosylation site" description="N-linked (GlcNAc...) asparagine" evidence="2">
    <location>
        <position position="167"/>
    </location>
</feature>
<protein>
    <recommendedName>
        <fullName>Taste receptor type 2 member 7</fullName>
        <shortName>T2R7</shortName>
    </recommendedName>
</protein>
<name>TA2R7_PAPHA</name>
<sequence length="317" mass="36591">MTDKVQTTLLFLAIGEFSVGILGNAFIGLVNCMDWVKKRKIASIDLILTSLAISRICLLCVILLDCFMLVLYPDVYATGKQMRIIDFFWTLTNHLSIWFATCLSIYYFFKIANFFHPLFLWMKWRIDRVISWILLGCMVLSVFINLPATENLNADFRRCVKAKRKTNLTWSCRVTKAQHASTKLFLNLVTLLPFSVCLVSFFLLILSLWRHIRRMQLSATGCRDPSTEAHVRALKAVISFLFLFIAYYLSFLIATSSYFIPETELAVIFGEFIALIYPSSHSFILILGNNKLRRASLKVLWTVMSILKGRKFQQKQI</sequence>
<organism>
    <name type="scientific">Papio hamadryas</name>
    <name type="common">Hamadryas baboon</name>
    <dbReference type="NCBI Taxonomy" id="9557"/>
    <lineage>
        <taxon>Eukaryota</taxon>
        <taxon>Metazoa</taxon>
        <taxon>Chordata</taxon>
        <taxon>Craniata</taxon>
        <taxon>Vertebrata</taxon>
        <taxon>Euteleostomi</taxon>
        <taxon>Mammalia</taxon>
        <taxon>Eutheria</taxon>
        <taxon>Euarchontoglires</taxon>
        <taxon>Primates</taxon>
        <taxon>Haplorrhini</taxon>
        <taxon>Catarrhini</taxon>
        <taxon>Cercopithecidae</taxon>
        <taxon>Cercopithecinae</taxon>
        <taxon>Papio</taxon>
    </lineage>
</organism>
<keyword id="KW-0297">G-protein coupled receptor</keyword>
<keyword id="KW-0325">Glycoprotein</keyword>
<keyword id="KW-0472">Membrane</keyword>
<keyword id="KW-0675">Receptor</keyword>
<keyword id="KW-0716">Sensory transduction</keyword>
<keyword id="KW-0919">Taste</keyword>
<keyword id="KW-0807">Transducer</keyword>
<keyword id="KW-0812">Transmembrane</keyword>
<keyword id="KW-1133">Transmembrane helix</keyword>
<dbReference type="EMBL" id="AY724826">
    <property type="protein sequence ID" value="AAU21063.1"/>
    <property type="molecule type" value="Genomic_DNA"/>
</dbReference>
<dbReference type="SMR" id="Q646F6"/>
<dbReference type="GlyCosmos" id="Q646F6">
    <property type="glycosylation" value="1 site, No reported glycans"/>
</dbReference>
<dbReference type="GO" id="GO:0005886">
    <property type="term" value="C:plasma membrane"/>
    <property type="evidence" value="ECO:0007669"/>
    <property type="project" value="UniProtKB-ARBA"/>
</dbReference>
<dbReference type="GO" id="GO:0033038">
    <property type="term" value="F:bitter taste receptor activity"/>
    <property type="evidence" value="ECO:0007669"/>
    <property type="project" value="InterPro"/>
</dbReference>
<dbReference type="GO" id="GO:0004930">
    <property type="term" value="F:G protein-coupled receptor activity"/>
    <property type="evidence" value="ECO:0007669"/>
    <property type="project" value="UniProtKB-KW"/>
</dbReference>
<dbReference type="CDD" id="cd15023">
    <property type="entry name" value="7tm_TAS2R7-like"/>
    <property type="match status" value="1"/>
</dbReference>
<dbReference type="FunFam" id="1.20.1070.10:FF:000042">
    <property type="entry name" value="Taste receptor type 2 member 7"/>
    <property type="match status" value="1"/>
</dbReference>
<dbReference type="Gene3D" id="1.20.1070.10">
    <property type="entry name" value="Rhodopsin 7-helix transmembrane proteins"/>
    <property type="match status" value="1"/>
</dbReference>
<dbReference type="InterPro" id="IPR017452">
    <property type="entry name" value="GPCR_Rhodpsn_7TM"/>
</dbReference>
<dbReference type="InterPro" id="IPR007960">
    <property type="entry name" value="TAS2R"/>
</dbReference>
<dbReference type="PANTHER" id="PTHR11394">
    <property type="entry name" value="TASTE RECEPTOR TYPE 2"/>
    <property type="match status" value="1"/>
</dbReference>
<dbReference type="PANTHER" id="PTHR11394:SF58">
    <property type="entry name" value="TASTE RECEPTOR TYPE 2 MEMBER 7"/>
    <property type="match status" value="1"/>
</dbReference>
<dbReference type="Pfam" id="PF05296">
    <property type="entry name" value="TAS2R"/>
    <property type="match status" value="1"/>
</dbReference>
<dbReference type="SUPFAM" id="SSF81321">
    <property type="entry name" value="Family A G protein-coupled receptor-like"/>
    <property type="match status" value="1"/>
</dbReference>
<dbReference type="PROSITE" id="PS50262">
    <property type="entry name" value="G_PROTEIN_RECEP_F1_2"/>
    <property type="match status" value="1"/>
</dbReference>
<evidence type="ECO:0000250" key="1"/>
<evidence type="ECO:0000255" key="2"/>
<evidence type="ECO:0000305" key="3"/>
<comment type="function">
    <text evidence="1">Gustducin-coupled receptor implicated in the perception of bitter compounds in the oral cavity and the gastrointestinal tract. Signals through PLCB2 and the calcium-regulated cation channel TRPM5 (By similarity).</text>
</comment>
<comment type="subcellular location">
    <subcellularLocation>
        <location>Membrane</location>
        <topology>Multi-pass membrane protein</topology>
    </subcellularLocation>
</comment>
<comment type="miscellaneous">
    <text>Several bitter taste receptors are expressed in a single taste receptor cell.</text>
</comment>
<comment type="similarity">
    <text evidence="3">Belongs to the G-protein coupled receptor T2R family.</text>
</comment>